<keyword id="KW-0315">Glutamine amidotransferase</keyword>
<keyword id="KW-0378">Hydrolase</keyword>
<keyword id="KW-0456">Lyase</keyword>
<keyword id="KW-0663">Pyridoxal phosphate</keyword>
<keyword id="KW-1185">Reference proteome</keyword>
<name>PDXT_MYCS2</name>
<feature type="initiator methionine" description="Removed" evidence="2">
    <location>
        <position position="1"/>
    </location>
</feature>
<feature type="chain" id="PRO_0000335571" description="Pyridoxal 5'-phosphate synthase subunit PdxT">
    <location>
        <begin position="2"/>
        <end position="193"/>
    </location>
</feature>
<feature type="active site" description="Nucleophile" evidence="1">
    <location>
        <position position="80"/>
    </location>
</feature>
<feature type="active site" description="Charge relay system" evidence="1">
    <location>
        <position position="176"/>
    </location>
</feature>
<feature type="active site" description="Charge relay system" evidence="1">
    <location>
        <position position="178"/>
    </location>
</feature>
<feature type="binding site" evidence="1">
    <location>
        <begin position="48"/>
        <end position="50"/>
    </location>
    <ligand>
        <name>L-glutamine</name>
        <dbReference type="ChEBI" id="CHEBI:58359"/>
    </ligand>
</feature>
<feature type="binding site" evidence="1">
    <location>
        <position position="112"/>
    </location>
    <ligand>
        <name>L-glutamine</name>
        <dbReference type="ChEBI" id="CHEBI:58359"/>
    </ligand>
</feature>
<feature type="binding site" evidence="1">
    <location>
        <begin position="140"/>
        <end position="141"/>
    </location>
    <ligand>
        <name>L-glutamine</name>
        <dbReference type="ChEBI" id="CHEBI:58359"/>
    </ligand>
</feature>
<evidence type="ECO:0000255" key="1">
    <source>
        <dbReference type="HAMAP-Rule" id="MF_01615"/>
    </source>
</evidence>
<evidence type="ECO:0000269" key="2">
    <source>
    </source>
</evidence>
<gene>
    <name evidence="1" type="primary">pdxT</name>
    <name type="ordered locus">MSMEG_2939</name>
    <name type="ordered locus">MSMEI_2865</name>
</gene>
<accession>A0QWH0</accession>
<accession>I7G9Y5</accession>
<dbReference type="EC" id="4.3.3.6" evidence="1"/>
<dbReference type="EC" id="3.5.1.2" evidence="1"/>
<dbReference type="EMBL" id="CP000480">
    <property type="protein sequence ID" value="ABK74770.1"/>
    <property type="molecule type" value="Genomic_DNA"/>
</dbReference>
<dbReference type="EMBL" id="CP001663">
    <property type="protein sequence ID" value="AFP39329.1"/>
    <property type="molecule type" value="Genomic_DNA"/>
</dbReference>
<dbReference type="RefSeq" id="WP_011728706.1">
    <property type="nucleotide sequence ID" value="NZ_SIJM01000002.1"/>
</dbReference>
<dbReference type="RefSeq" id="YP_887258.1">
    <property type="nucleotide sequence ID" value="NC_008596.1"/>
</dbReference>
<dbReference type="SMR" id="A0QWH0"/>
<dbReference type="STRING" id="246196.MSMEG_2939"/>
<dbReference type="PaxDb" id="246196-MSMEI_2865"/>
<dbReference type="GeneID" id="93457719"/>
<dbReference type="KEGG" id="msb:LJ00_14625"/>
<dbReference type="KEGG" id="msg:MSMEI_2865"/>
<dbReference type="KEGG" id="msm:MSMEG_2939"/>
<dbReference type="PATRIC" id="fig|246196.19.peg.2902"/>
<dbReference type="eggNOG" id="COG0311">
    <property type="taxonomic scope" value="Bacteria"/>
</dbReference>
<dbReference type="OrthoDB" id="9810320at2"/>
<dbReference type="UniPathway" id="UPA00245"/>
<dbReference type="Proteomes" id="UP000000757">
    <property type="component" value="Chromosome"/>
</dbReference>
<dbReference type="Proteomes" id="UP000006158">
    <property type="component" value="Chromosome"/>
</dbReference>
<dbReference type="GO" id="GO:0005829">
    <property type="term" value="C:cytosol"/>
    <property type="evidence" value="ECO:0007669"/>
    <property type="project" value="TreeGrafter"/>
</dbReference>
<dbReference type="GO" id="GO:1903600">
    <property type="term" value="C:glutaminase complex"/>
    <property type="evidence" value="ECO:0007669"/>
    <property type="project" value="TreeGrafter"/>
</dbReference>
<dbReference type="GO" id="GO:0004359">
    <property type="term" value="F:glutaminase activity"/>
    <property type="evidence" value="ECO:0007669"/>
    <property type="project" value="UniProtKB-UniRule"/>
</dbReference>
<dbReference type="GO" id="GO:0036381">
    <property type="term" value="F:pyridoxal 5'-phosphate synthase (glutamine hydrolysing) activity"/>
    <property type="evidence" value="ECO:0007669"/>
    <property type="project" value="UniProtKB-UniRule"/>
</dbReference>
<dbReference type="GO" id="GO:0006543">
    <property type="term" value="P:glutamine catabolic process"/>
    <property type="evidence" value="ECO:0007669"/>
    <property type="project" value="UniProtKB-UniRule"/>
</dbReference>
<dbReference type="GO" id="GO:0042823">
    <property type="term" value="P:pyridoxal phosphate biosynthetic process"/>
    <property type="evidence" value="ECO:0007669"/>
    <property type="project" value="UniProtKB-UniRule"/>
</dbReference>
<dbReference type="GO" id="GO:0008614">
    <property type="term" value="P:pyridoxine metabolic process"/>
    <property type="evidence" value="ECO:0007669"/>
    <property type="project" value="TreeGrafter"/>
</dbReference>
<dbReference type="CDD" id="cd01749">
    <property type="entry name" value="GATase1_PB"/>
    <property type="match status" value="1"/>
</dbReference>
<dbReference type="FunFam" id="3.40.50.880:FF:000010">
    <property type="entry name" value="uncharacterized protein LOC100176842 isoform X2"/>
    <property type="match status" value="1"/>
</dbReference>
<dbReference type="Gene3D" id="3.40.50.880">
    <property type="match status" value="1"/>
</dbReference>
<dbReference type="HAMAP" id="MF_01615">
    <property type="entry name" value="PdxT"/>
    <property type="match status" value="1"/>
</dbReference>
<dbReference type="InterPro" id="IPR029062">
    <property type="entry name" value="Class_I_gatase-like"/>
</dbReference>
<dbReference type="InterPro" id="IPR002161">
    <property type="entry name" value="PdxT/SNO"/>
</dbReference>
<dbReference type="InterPro" id="IPR021196">
    <property type="entry name" value="PdxT/SNO_CS"/>
</dbReference>
<dbReference type="NCBIfam" id="TIGR03800">
    <property type="entry name" value="PLP_synth_Pdx2"/>
    <property type="match status" value="1"/>
</dbReference>
<dbReference type="PANTHER" id="PTHR31559">
    <property type="entry name" value="PYRIDOXAL 5'-PHOSPHATE SYNTHASE SUBUNIT SNO"/>
    <property type="match status" value="1"/>
</dbReference>
<dbReference type="PANTHER" id="PTHR31559:SF0">
    <property type="entry name" value="PYRIDOXAL 5'-PHOSPHATE SYNTHASE SUBUNIT SNO1-RELATED"/>
    <property type="match status" value="1"/>
</dbReference>
<dbReference type="Pfam" id="PF01174">
    <property type="entry name" value="SNO"/>
    <property type="match status" value="1"/>
</dbReference>
<dbReference type="PIRSF" id="PIRSF005639">
    <property type="entry name" value="Glut_amidoT_SNO"/>
    <property type="match status" value="1"/>
</dbReference>
<dbReference type="SUPFAM" id="SSF52317">
    <property type="entry name" value="Class I glutamine amidotransferase-like"/>
    <property type="match status" value="1"/>
</dbReference>
<dbReference type="PROSITE" id="PS01236">
    <property type="entry name" value="PDXT_SNO_1"/>
    <property type="match status" value="1"/>
</dbReference>
<dbReference type="PROSITE" id="PS51130">
    <property type="entry name" value="PDXT_SNO_2"/>
    <property type="match status" value="1"/>
</dbReference>
<proteinExistence type="evidence at protein level"/>
<sequence length="193" mass="20725">MTAHVGVLALQGDTREHLAALREAGAEASTVRRLSELAAVDALVIPGGESTAISHLLREFDLLEPLRARIAEGMPCYGSCAGMILLATEIADAGVPGRAAVPLKGIDMTVRRNAFGRQVDSFEGDIDFVGLDTPVHAVFIRAPWVERIGPDVEVLARADDHIVAVRQGPMFATAFHPEVTGDRRIHKLFVDSL</sequence>
<protein>
    <recommendedName>
        <fullName evidence="1">Pyridoxal 5'-phosphate synthase subunit PdxT</fullName>
        <ecNumber evidence="1">4.3.3.6</ecNumber>
    </recommendedName>
    <alternativeName>
        <fullName evidence="1">Pdx2</fullName>
    </alternativeName>
    <alternativeName>
        <fullName evidence="1">Pyridoxal 5'-phosphate synthase glutaminase subunit</fullName>
        <ecNumber evidence="1">3.5.1.2</ecNumber>
    </alternativeName>
</protein>
<organism>
    <name type="scientific">Mycolicibacterium smegmatis (strain ATCC 700084 / mc(2)155)</name>
    <name type="common">Mycobacterium smegmatis</name>
    <dbReference type="NCBI Taxonomy" id="246196"/>
    <lineage>
        <taxon>Bacteria</taxon>
        <taxon>Bacillati</taxon>
        <taxon>Actinomycetota</taxon>
        <taxon>Actinomycetes</taxon>
        <taxon>Mycobacteriales</taxon>
        <taxon>Mycobacteriaceae</taxon>
        <taxon>Mycolicibacterium</taxon>
    </lineage>
</organism>
<comment type="function">
    <text evidence="1">Catalyzes the hydrolysis of glutamine to glutamate and ammonia as part of the biosynthesis of pyridoxal 5'-phosphate. The resulting ammonia molecule is channeled to the active site of PdxS.</text>
</comment>
<comment type="catalytic activity">
    <reaction evidence="1">
        <text>aldehydo-D-ribose 5-phosphate + D-glyceraldehyde 3-phosphate + L-glutamine = pyridoxal 5'-phosphate + L-glutamate + phosphate + 3 H2O + H(+)</text>
        <dbReference type="Rhea" id="RHEA:31507"/>
        <dbReference type="ChEBI" id="CHEBI:15377"/>
        <dbReference type="ChEBI" id="CHEBI:15378"/>
        <dbReference type="ChEBI" id="CHEBI:29985"/>
        <dbReference type="ChEBI" id="CHEBI:43474"/>
        <dbReference type="ChEBI" id="CHEBI:58273"/>
        <dbReference type="ChEBI" id="CHEBI:58359"/>
        <dbReference type="ChEBI" id="CHEBI:59776"/>
        <dbReference type="ChEBI" id="CHEBI:597326"/>
        <dbReference type="EC" id="4.3.3.6"/>
    </reaction>
</comment>
<comment type="catalytic activity">
    <reaction evidence="1">
        <text>L-glutamine + H2O = L-glutamate + NH4(+)</text>
        <dbReference type="Rhea" id="RHEA:15889"/>
        <dbReference type="ChEBI" id="CHEBI:15377"/>
        <dbReference type="ChEBI" id="CHEBI:28938"/>
        <dbReference type="ChEBI" id="CHEBI:29985"/>
        <dbReference type="ChEBI" id="CHEBI:58359"/>
        <dbReference type="EC" id="3.5.1.2"/>
    </reaction>
</comment>
<comment type="pathway">
    <text evidence="1">Cofactor biosynthesis; pyridoxal 5'-phosphate biosynthesis.</text>
</comment>
<comment type="subunit">
    <text evidence="1">In the presence of PdxS, forms a dodecamer of heterodimers. Only shows activity in the heterodimer.</text>
</comment>
<comment type="similarity">
    <text evidence="1">Belongs to the glutaminase PdxT/SNO family.</text>
</comment>
<reference key="1">
    <citation type="submission" date="2006-10" db="EMBL/GenBank/DDBJ databases">
        <authorList>
            <person name="Fleischmann R.D."/>
            <person name="Dodson R.J."/>
            <person name="Haft D.H."/>
            <person name="Merkel J.S."/>
            <person name="Nelson W.C."/>
            <person name="Fraser C.M."/>
        </authorList>
    </citation>
    <scope>NUCLEOTIDE SEQUENCE [LARGE SCALE GENOMIC DNA]</scope>
    <source>
        <strain>ATCC 700084 / mc(2)155</strain>
    </source>
</reference>
<reference key="2">
    <citation type="journal article" date="2007" name="Genome Biol.">
        <title>Interrupted coding sequences in Mycobacterium smegmatis: authentic mutations or sequencing errors?</title>
        <authorList>
            <person name="Deshayes C."/>
            <person name="Perrodou E."/>
            <person name="Gallien S."/>
            <person name="Euphrasie D."/>
            <person name="Schaeffer C."/>
            <person name="Van-Dorsselaer A."/>
            <person name="Poch O."/>
            <person name="Lecompte O."/>
            <person name="Reyrat J.-M."/>
        </authorList>
    </citation>
    <scope>NUCLEOTIDE SEQUENCE [LARGE SCALE GENOMIC DNA]</scope>
    <source>
        <strain>ATCC 700084 / mc(2)155</strain>
    </source>
</reference>
<reference key="3">
    <citation type="journal article" date="2009" name="Genome Res.">
        <title>Ortho-proteogenomics: multiple proteomes investigation through orthology and a new MS-based protocol.</title>
        <authorList>
            <person name="Gallien S."/>
            <person name="Perrodou E."/>
            <person name="Carapito C."/>
            <person name="Deshayes C."/>
            <person name="Reyrat J.-M."/>
            <person name="Van Dorsselaer A."/>
            <person name="Poch O."/>
            <person name="Schaeffer C."/>
            <person name="Lecompte O."/>
        </authorList>
    </citation>
    <scope>NUCLEOTIDE SEQUENCE [LARGE SCALE GENOMIC DNA]</scope>
    <scope>IDENTIFICATION BY MASS SPECTROMETRY [LARGE SCALE ANALYSIS]</scope>
    <scope>CLEAVAGE OF INITIATOR METHIONINE</scope>
    <source>
        <strain>ATCC 700084 / mc(2)155</strain>
    </source>
</reference>